<feature type="chain" id="PRO_1000019260" description="Enolase">
    <location>
        <begin position="1"/>
        <end position="431"/>
    </location>
</feature>
<feature type="active site" description="Proton donor" evidence="1">
    <location>
        <position position="209"/>
    </location>
</feature>
<feature type="active site" description="Proton acceptor" evidence="1">
    <location>
        <position position="342"/>
    </location>
</feature>
<feature type="binding site" evidence="1">
    <location>
        <position position="167"/>
    </location>
    <ligand>
        <name>(2R)-2-phosphoglycerate</name>
        <dbReference type="ChEBI" id="CHEBI:58289"/>
    </ligand>
</feature>
<feature type="binding site" evidence="1">
    <location>
        <position position="246"/>
    </location>
    <ligand>
        <name>Mg(2+)</name>
        <dbReference type="ChEBI" id="CHEBI:18420"/>
    </ligand>
</feature>
<feature type="binding site" evidence="1">
    <location>
        <position position="290"/>
    </location>
    <ligand>
        <name>Mg(2+)</name>
        <dbReference type="ChEBI" id="CHEBI:18420"/>
    </ligand>
</feature>
<feature type="binding site" evidence="1">
    <location>
        <position position="317"/>
    </location>
    <ligand>
        <name>Mg(2+)</name>
        <dbReference type="ChEBI" id="CHEBI:18420"/>
    </ligand>
</feature>
<feature type="binding site" evidence="1">
    <location>
        <position position="342"/>
    </location>
    <ligand>
        <name>(2R)-2-phosphoglycerate</name>
        <dbReference type="ChEBI" id="CHEBI:58289"/>
    </ligand>
</feature>
<feature type="binding site" evidence="1">
    <location>
        <position position="371"/>
    </location>
    <ligand>
        <name>(2R)-2-phosphoglycerate</name>
        <dbReference type="ChEBI" id="CHEBI:58289"/>
    </ligand>
</feature>
<feature type="binding site" evidence="1">
    <location>
        <position position="372"/>
    </location>
    <ligand>
        <name>(2R)-2-phosphoglycerate</name>
        <dbReference type="ChEBI" id="CHEBI:58289"/>
    </ligand>
</feature>
<feature type="binding site" evidence="1">
    <location>
        <position position="393"/>
    </location>
    <ligand>
        <name>(2R)-2-phosphoglycerate</name>
        <dbReference type="ChEBI" id="CHEBI:58289"/>
    </ligand>
</feature>
<organism>
    <name type="scientific">Yersinia enterocolitica serotype O:8 / biotype 1B (strain NCTC 13174 / 8081)</name>
    <dbReference type="NCBI Taxonomy" id="393305"/>
    <lineage>
        <taxon>Bacteria</taxon>
        <taxon>Pseudomonadati</taxon>
        <taxon>Pseudomonadota</taxon>
        <taxon>Gammaproteobacteria</taxon>
        <taxon>Enterobacterales</taxon>
        <taxon>Yersiniaceae</taxon>
        <taxon>Yersinia</taxon>
    </lineage>
</organism>
<gene>
    <name evidence="1" type="primary">eno</name>
    <name type="ordered locus">YE0747</name>
</gene>
<evidence type="ECO:0000255" key="1">
    <source>
        <dbReference type="HAMAP-Rule" id="MF_00318"/>
    </source>
</evidence>
<sequence length="431" mass="45467">MSKIVKVIGREIIDSRGNPTVEAEVHLEGGFVGLAAAPSGASTGSREALELRDGDKSRFLGKGVLKAVAAVNGPIAQAVIGKDAKDQANIDKIMIDLDGTENKSQFGANAILAVSLAAAKAAAASKGMPLYEHIAELNGTPGKFSMPLPMMNIINGGEHADNNVDIQEFMIQPVGAKTLKEAVRIGSEVFHTLAKVLKAKGMSTAVGDEGGYAPNLGSNAEALAVIAEAVKQAGYELGKDVTLAMDCAASEFYKDGKYVLAGEGNKAFTSEEFTHFLEDLTKQYPIVSIEDGLDESDWAGFKYQTEVLGDKIQLVGDDLFVTNTKILKEGIEKGVANSILIKFNQIGSLTETLAAIKMAKDAGYTAVISHRSGETEDATIADLAVGTAAGQIKTGSMSRSDRVAKYNQLIRIEEALGDRAPFNGLKEVKGQ</sequence>
<accession>A1JJR4</accession>
<dbReference type="EC" id="4.2.1.11" evidence="1"/>
<dbReference type="EMBL" id="AM286415">
    <property type="protein sequence ID" value="CAL10851.1"/>
    <property type="molecule type" value="Genomic_DNA"/>
</dbReference>
<dbReference type="RefSeq" id="WP_005164105.1">
    <property type="nucleotide sequence ID" value="NC_008800.1"/>
</dbReference>
<dbReference type="RefSeq" id="YP_001005091.1">
    <property type="nucleotide sequence ID" value="NC_008800.1"/>
</dbReference>
<dbReference type="SMR" id="A1JJR4"/>
<dbReference type="GeneID" id="93971000"/>
<dbReference type="KEGG" id="yen:YE0747"/>
<dbReference type="PATRIC" id="fig|393305.7.peg.842"/>
<dbReference type="eggNOG" id="COG0148">
    <property type="taxonomic scope" value="Bacteria"/>
</dbReference>
<dbReference type="HOGENOM" id="CLU_031223_2_1_6"/>
<dbReference type="OrthoDB" id="9804716at2"/>
<dbReference type="UniPathway" id="UPA00109">
    <property type="reaction ID" value="UER00187"/>
</dbReference>
<dbReference type="Proteomes" id="UP000000642">
    <property type="component" value="Chromosome"/>
</dbReference>
<dbReference type="GO" id="GO:0009986">
    <property type="term" value="C:cell surface"/>
    <property type="evidence" value="ECO:0007669"/>
    <property type="project" value="UniProtKB-SubCell"/>
</dbReference>
<dbReference type="GO" id="GO:0005576">
    <property type="term" value="C:extracellular region"/>
    <property type="evidence" value="ECO:0007669"/>
    <property type="project" value="UniProtKB-SubCell"/>
</dbReference>
<dbReference type="GO" id="GO:0000015">
    <property type="term" value="C:phosphopyruvate hydratase complex"/>
    <property type="evidence" value="ECO:0007669"/>
    <property type="project" value="InterPro"/>
</dbReference>
<dbReference type="GO" id="GO:0000287">
    <property type="term" value="F:magnesium ion binding"/>
    <property type="evidence" value="ECO:0007669"/>
    <property type="project" value="UniProtKB-UniRule"/>
</dbReference>
<dbReference type="GO" id="GO:0004634">
    <property type="term" value="F:phosphopyruvate hydratase activity"/>
    <property type="evidence" value="ECO:0007669"/>
    <property type="project" value="UniProtKB-UniRule"/>
</dbReference>
<dbReference type="GO" id="GO:0006096">
    <property type="term" value="P:glycolytic process"/>
    <property type="evidence" value="ECO:0007669"/>
    <property type="project" value="UniProtKB-UniRule"/>
</dbReference>
<dbReference type="CDD" id="cd03313">
    <property type="entry name" value="enolase"/>
    <property type="match status" value="1"/>
</dbReference>
<dbReference type="FunFam" id="3.20.20.120:FF:000001">
    <property type="entry name" value="Enolase"/>
    <property type="match status" value="1"/>
</dbReference>
<dbReference type="FunFam" id="3.30.390.10:FF:000001">
    <property type="entry name" value="Enolase"/>
    <property type="match status" value="1"/>
</dbReference>
<dbReference type="Gene3D" id="3.20.20.120">
    <property type="entry name" value="Enolase-like C-terminal domain"/>
    <property type="match status" value="1"/>
</dbReference>
<dbReference type="Gene3D" id="3.30.390.10">
    <property type="entry name" value="Enolase-like, N-terminal domain"/>
    <property type="match status" value="1"/>
</dbReference>
<dbReference type="HAMAP" id="MF_00318">
    <property type="entry name" value="Enolase"/>
    <property type="match status" value="1"/>
</dbReference>
<dbReference type="InterPro" id="IPR000941">
    <property type="entry name" value="Enolase"/>
</dbReference>
<dbReference type="InterPro" id="IPR036849">
    <property type="entry name" value="Enolase-like_C_sf"/>
</dbReference>
<dbReference type="InterPro" id="IPR029017">
    <property type="entry name" value="Enolase-like_N"/>
</dbReference>
<dbReference type="InterPro" id="IPR020810">
    <property type="entry name" value="Enolase_C"/>
</dbReference>
<dbReference type="InterPro" id="IPR020809">
    <property type="entry name" value="Enolase_CS"/>
</dbReference>
<dbReference type="InterPro" id="IPR020811">
    <property type="entry name" value="Enolase_N"/>
</dbReference>
<dbReference type="NCBIfam" id="TIGR01060">
    <property type="entry name" value="eno"/>
    <property type="match status" value="1"/>
</dbReference>
<dbReference type="PANTHER" id="PTHR11902">
    <property type="entry name" value="ENOLASE"/>
    <property type="match status" value="1"/>
</dbReference>
<dbReference type="PANTHER" id="PTHR11902:SF1">
    <property type="entry name" value="ENOLASE"/>
    <property type="match status" value="1"/>
</dbReference>
<dbReference type="Pfam" id="PF00113">
    <property type="entry name" value="Enolase_C"/>
    <property type="match status" value="1"/>
</dbReference>
<dbReference type="Pfam" id="PF03952">
    <property type="entry name" value="Enolase_N"/>
    <property type="match status" value="1"/>
</dbReference>
<dbReference type="PIRSF" id="PIRSF001400">
    <property type="entry name" value="Enolase"/>
    <property type="match status" value="1"/>
</dbReference>
<dbReference type="PRINTS" id="PR00148">
    <property type="entry name" value="ENOLASE"/>
</dbReference>
<dbReference type="SFLD" id="SFLDF00002">
    <property type="entry name" value="enolase"/>
    <property type="match status" value="1"/>
</dbReference>
<dbReference type="SFLD" id="SFLDG00178">
    <property type="entry name" value="enolase"/>
    <property type="match status" value="1"/>
</dbReference>
<dbReference type="SMART" id="SM01192">
    <property type="entry name" value="Enolase_C"/>
    <property type="match status" value="1"/>
</dbReference>
<dbReference type="SMART" id="SM01193">
    <property type="entry name" value="Enolase_N"/>
    <property type="match status" value="1"/>
</dbReference>
<dbReference type="SUPFAM" id="SSF51604">
    <property type="entry name" value="Enolase C-terminal domain-like"/>
    <property type="match status" value="1"/>
</dbReference>
<dbReference type="SUPFAM" id="SSF54826">
    <property type="entry name" value="Enolase N-terminal domain-like"/>
    <property type="match status" value="1"/>
</dbReference>
<dbReference type="PROSITE" id="PS00164">
    <property type="entry name" value="ENOLASE"/>
    <property type="match status" value="1"/>
</dbReference>
<protein>
    <recommendedName>
        <fullName evidence="1">Enolase</fullName>
        <ecNumber evidence="1">4.2.1.11</ecNumber>
    </recommendedName>
    <alternativeName>
        <fullName evidence="1">2-phospho-D-glycerate hydro-lyase</fullName>
    </alternativeName>
    <alternativeName>
        <fullName evidence="1">2-phosphoglycerate dehydratase</fullName>
    </alternativeName>
</protein>
<name>ENO_YERE8</name>
<keyword id="KW-0963">Cytoplasm</keyword>
<keyword id="KW-0324">Glycolysis</keyword>
<keyword id="KW-0456">Lyase</keyword>
<keyword id="KW-0460">Magnesium</keyword>
<keyword id="KW-0479">Metal-binding</keyword>
<keyword id="KW-0964">Secreted</keyword>
<comment type="function">
    <text evidence="1">Catalyzes the reversible conversion of 2-phosphoglycerate (2-PG) into phosphoenolpyruvate (PEP). It is essential for the degradation of carbohydrates via glycolysis.</text>
</comment>
<comment type="catalytic activity">
    <reaction evidence="1">
        <text>(2R)-2-phosphoglycerate = phosphoenolpyruvate + H2O</text>
        <dbReference type="Rhea" id="RHEA:10164"/>
        <dbReference type="ChEBI" id="CHEBI:15377"/>
        <dbReference type="ChEBI" id="CHEBI:58289"/>
        <dbReference type="ChEBI" id="CHEBI:58702"/>
        <dbReference type="EC" id="4.2.1.11"/>
    </reaction>
</comment>
<comment type="cofactor">
    <cofactor evidence="1">
        <name>Mg(2+)</name>
        <dbReference type="ChEBI" id="CHEBI:18420"/>
    </cofactor>
    <text evidence="1">Binds a second Mg(2+) ion via substrate during catalysis.</text>
</comment>
<comment type="pathway">
    <text evidence="1">Carbohydrate degradation; glycolysis; pyruvate from D-glyceraldehyde 3-phosphate: step 4/5.</text>
</comment>
<comment type="subunit">
    <text evidence="1">Component of the RNA degradosome, a multiprotein complex involved in RNA processing and mRNA degradation.</text>
</comment>
<comment type="subcellular location">
    <subcellularLocation>
        <location evidence="1">Cytoplasm</location>
    </subcellularLocation>
    <subcellularLocation>
        <location evidence="1">Secreted</location>
    </subcellularLocation>
    <subcellularLocation>
        <location evidence="1">Cell surface</location>
    </subcellularLocation>
    <text evidence="1">Fractions of enolase are present in both the cytoplasm and on the cell surface.</text>
</comment>
<comment type="similarity">
    <text evidence="1">Belongs to the enolase family.</text>
</comment>
<proteinExistence type="inferred from homology"/>
<reference key="1">
    <citation type="journal article" date="2006" name="PLoS Genet.">
        <title>The complete genome sequence and comparative genome analysis of the high pathogenicity Yersinia enterocolitica strain 8081.</title>
        <authorList>
            <person name="Thomson N.R."/>
            <person name="Howard S."/>
            <person name="Wren B.W."/>
            <person name="Holden M.T.G."/>
            <person name="Crossman L."/>
            <person name="Challis G.L."/>
            <person name="Churcher C."/>
            <person name="Mungall K."/>
            <person name="Brooks K."/>
            <person name="Chillingworth T."/>
            <person name="Feltwell T."/>
            <person name="Abdellah Z."/>
            <person name="Hauser H."/>
            <person name="Jagels K."/>
            <person name="Maddison M."/>
            <person name="Moule S."/>
            <person name="Sanders M."/>
            <person name="Whitehead S."/>
            <person name="Quail M.A."/>
            <person name="Dougan G."/>
            <person name="Parkhill J."/>
            <person name="Prentice M.B."/>
        </authorList>
    </citation>
    <scope>NUCLEOTIDE SEQUENCE [LARGE SCALE GENOMIC DNA]</scope>
    <source>
        <strain>NCTC 13174 / 8081</strain>
    </source>
</reference>